<feature type="chain" id="PRO_0000206469" description="UPF0735 ACT domain-containing protein CA_C1234">
    <location>
        <begin position="1"/>
        <end position="155"/>
    </location>
</feature>
<feature type="domain" description="ACT" evidence="1">
    <location>
        <begin position="79"/>
        <end position="154"/>
    </location>
</feature>
<proteinExistence type="inferred from homology"/>
<evidence type="ECO:0000255" key="1">
    <source>
        <dbReference type="HAMAP-Rule" id="MF_00707"/>
    </source>
</evidence>
<dbReference type="EMBL" id="AE001437">
    <property type="protein sequence ID" value="AAK79206.1"/>
    <property type="molecule type" value="Genomic_DNA"/>
</dbReference>
<dbReference type="PIR" id="C97052">
    <property type="entry name" value="C97052"/>
</dbReference>
<dbReference type="RefSeq" id="NP_347866.1">
    <property type="nucleotide sequence ID" value="NC_003030.1"/>
</dbReference>
<dbReference type="RefSeq" id="WP_010964547.1">
    <property type="nucleotide sequence ID" value="NC_003030.1"/>
</dbReference>
<dbReference type="STRING" id="272562.CA_C1234"/>
<dbReference type="KEGG" id="cac:CA_C1234"/>
<dbReference type="PATRIC" id="fig|272562.8.peg.1434"/>
<dbReference type="eggNOG" id="COG4492">
    <property type="taxonomic scope" value="Bacteria"/>
</dbReference>
<dbReference type="HOGENOM" id="CLU_128147_0_0_9"/>
<dbReference type="OrthoDB" id="9788773at2"/>
<dbReference type="Proteomes" id="UP000000814">
    <property type="component" value="Chromosome"/>
</dbReference>
<dbReference type="CDD" id="cd04888">
    <property type="entry name" value="ACT_PheB-BS"/>
    <property type="match status" value="1"/>
</dbReference>
<dbReference type="Gene3D" id="3.30.70.260">
    <property type="match status" value="1"/>
</dbReference>
<dbReference type="HAMAP" id="MF_00707">
    <property type="entry name" value="UPF0735"/>
    <property type="match status" value="1"/>
</dbReference>
<dbReference type="InterPro" id="IPR045865">
    <property type="entry name" value="ACT-like_dom_sf"/>
</dbReference>
<dbReference type="InterPro" id="IPR002912">
    <property type="entry name" value="ACT_dom"/>
</dbReference>
<dbReference type="InterPro" id="IPR008310">
    <property type="entry name" value="UPF0735_ACT_dom-cont"/>
</dbReference>
<dbReference type="NCBIfam" id="NF003361">
    <property type="entry name" value="PRK04435.1"/>
    <property type="match status" value="1"/>
</dbReference>
<dbReference type="Pfam" id="PF13291">
    <property type="entry name" value="ACT_4"/>
    <property type="match status" value="1"/>
</dbReference>
<dbReference type="PIRSF" id="PIRSF025624">
    <property type="entry name" value="ACT_PheB"/>
    <property type="match status" value="1"/>
</dbReference>
<dbReference type="SUPFAM" id="SSF55021">
    <property type="entry name" value="ACT-like"/>
    <property type="match status" value="1"/>
</dbReference>
<dbReference type="PROSITE" id="PS51671">
    <property type="entry name" value="ACT"/>
    <property type="match status" value="1"/>
</dbReference>
<accession>Q97JN9</accession>
<sequence length="155" mass="17473">MEVVIKISTTEAKKYLLIDTSVLPDVFEEVIQVKELLRSAKVKDITEAVKKVGISRSTYYKYKDYVFNVSDGLKSQKVTISILIEHRRGTLSEVLDKLAQRCCNILTINQDIPINNTANVNITFDISGISGDVKNIVEELKKIKNVLKVEIVAME</sequence>
<comment type="similarity">
    <text evidence="1">Belongs to the UPF0735 family.</text>
</comment>
<name>Y1234_CLOAB</name>
<gene>
    <name type="ordered locus">CA_C1234</name>
</gene>
<reference key="1">
    <citation type="journal article" date="2001" name="J. Bacteriol.">
        <title>Genome sequence and comparative analysis of the solvent-producing bacterium Clostridium acetobutylicum.</title>
        <authorList>
            <person name="Noelling J."/>
            <person name="Breton G."/>
            <person name="Omelchenko M.V."/>
            <person name="Makarova K.S."/>
            <person name="Zeng Q."/>
            <person name="Gibson R."/>
            <person name="Lee H.M."/>
            <person name="Dubois J."/>
            <person name="Qiu D."/>
            <person name="Hitti J."/>
            <person name="Wolf Y.I."/>
            <person name="Tatusov R.L."/>
            <person name="Sabathe F."/>
            <person name="Doucette-Stamm L.A."/>
            <person name="Soucaille P."/>
            <person name="Daly M.J."/>
            <person name="Bennett G.N."/>
            <person name="Koonin E.V."/>
            <person name="Smith D.R."/>
        </authorList>
    </citation>
    <scope>NUCLEOTIDE SEQUENCE [LARGE SCALE GENOMIC DNA]</scope>
    <source>
        <strain>ATCC 824 / DSM 792 / JCM 1419 / IAM 19013 / LMG 5710 / NBRC 13948 / NRRL B-527 / VKM B-1787 / 2291 / W</strain>
    </source>
</reference>
<protein>
    <recommendedName>
        <fullName evidence="1">UPF0735 ACT domain-containing protein CA_C1234</fullName>
    </recommendedName>
</protein>
<organism>
    <name type="scientific">Clostridium acetobutylicum (strain ATCC 824 / DSM 792 / JCM 1419 / IAM 19013 / LMG 5710 / NBRC 13948 / NRRL B-527 / VKM B-1787 / 2291 / W)</name>
    <dbReference type="NCBI Taxonomy" id="272562"/>
    <lineage>
        <taxon>Bacteria</taxon>
        <taxon>Bacillati</taxon>
        <taxon>Bacillota</taxon>
        <taxon>Clostridia</taxon>
        <taxon>Eubacteriales</taxon>
        <taxon>Clostridiaceae</taxon>
        <taxon>Clostridium</taxon>
    </lineage>
</organism>
<keyword id="KW-1185">Reference proteome</keyword>